<evidence type="ECO:0000255" key="1">
    <source>
        <dbReference type="HAMAP-Rule" id="MF_03116"/>
    </source>
</evidence>
<feature type="chain" id="PRO_0000393817" description="Methylthioribulose-1-phosphate dehydratase">
    <location>
        <begin position="1"/>
        <end position="279"/>
    </location>
</feature>
<feature type="active site" description="Proton donor/acceptor" evidence="1">
    <location>
        <position position="175"/>
    </location>
</feature>
<feature type="binding site" evidence="1">
    <location>
        <position position="132"/>
    </location>
    <ligand>
        <name>substrate</name>
    </ligand>
</feature>
<feature type="binding site" evidence="1">
    <location>
        <position position="150"/>
    </location>
    <ligand>
        <name>Zn(2+)</name>
        <dbReference type="ChEBI" id="CHEBI:29105"/>
    </ligand>
</feature>
<feature type="binding site" evidence="1">
    <location>
        <position position="152"/>
    </location>
    <ligand>
        <name>Zn(2+)</name>
        <dbReference type="ChEBI" id="CHEBI:29105"/>
    </ligand>
</feature>
<feature type="binding site" evidence="1">
    <location>
        <position position="240"/>
    </location>
    <ligand>
        <name>Zn(2+)</name>
        <dbReference type="ChEBI" id="CHEBI:29105"/>
    </ligand>
</feature>
<keyword id="KW-0028">Amino-acid biosynthesis</keyword>
<keyword id="KW-0963">Cytoplasm</keyword>
<keyword id="KW-0456">Lyase</keyword>
<keyword id="KW-0479">Metal-binding</keyword>
<keyword id="KW-0486">Methionine biosynthesis</keyword>
<keyword id="KW-1185">Reference proteome</keyword>
<keyword id="KW-0862">Zinc</keyword>
<accession>C5MHJ2</accession>
<organism>
    <name type="scientific">Candida tropicalis (strain ATCC MYA-3404 / T1)</name>
    <name type="common">Yeast</name>
    <dbReference type="NCBI Taxonomy" id="294747"/>
    <lineage>
        <taxon>Eukaryota</taxon>
        <taxon>Fungi</taxon>
        <taxon>Dikarya</taxon>
        <taxon>Ascomycota</taxon>
        <taxon>Saccharomycotina</taxon>
        <taxon>Pichiomycetes</taxon>
        <taxon>Debaryomycetaceae</taxon>
        <taxon>Candida/Lodderomyces clade</taxon>
        <taxon>Candida</taxon>
    </lineage>
</organism>
<dbReference type="EC" id="4.2.1.109" evidence="1"/>
<dbReference type="EMBL" id="GG692402">
    <property type="protein sequence ID" value="EER31094.1"/>
    <property type="molecule type" value="Genomic_DNA"/>
</dbReference>
<dbReference type="RefSeq" id="XP_002551248.1">
    <property type="nucleotide sequence ID" value="XM_002551202.1"/>
</dbReference>
<dbReference type="SMR" id="C5MHJ2"/>
<dbReference type="STRING" id="294747.C5MHJ2"/>
<dbReference type="EnsemblFungi" id="CTRG_05546-t43_1">
    <property type="protein sequence ID" value="CTRG_05546-t43_1-p1"/>
    <property type="gene ID" value="CTRG_05546"/>
</dbReference>
<dbReference type="GeneID" id="8300680"/>
<dbReference type="KEGG" id="ctp:CTRG_05546"/>
<dbReference type="VEuPathDB" id="FungiDB:CTRG_05546"/>
<dbReference type="eggNOG" id="KOG2631">
    <property type="taxonomic scope" value="Eukaryota"/>
</dbReference>
<dbReference type="HOGENOM" id="CLU_006033_4_0_1"/>
<dbReference type="OrthoDB" id="191080at2759"/>
<dbReference type="UniPathway" id="UPA00904">
    <property type="reaction ID" value="UER00875"/>
</dbReference>
<dbReference type="Proteomes" id="UP000002037">
    <property type="component" value="Unassembled WGS sequence"/>
</dbReference>
<dbReference type="GO" id="GO:0005737">
    <property type="term" value="C:cytoplasm"/>
    <property type="evidence" value="ECO:0007669"/>
    <property type="project" value="UniProtKB-SubCell"/>
</dbReference>
<dbReference type="GO" id="GO:0046570">
    <property type="term" value="F:methylthioribulose 1-phosphate dehydratase activity"/>
    <property type="evidence" value="ECO:0007669"/>
    <property type="project" value="UniProtKB-UniRule"/>
</dbReference>
<dbReference type="GO" id="GO:0008270">
    <property type="term" value="F:zinc ion binding"/>
    <property type="evidence" value="ECO:0007669"/>
    <property type="project" value="UniProtKB-UniRule"/>
</dbReference>
<dbReference type="GO" id="GO:0019509">
    <property type="term" value="P:L-methionine salvage from methylthioadenosine"/>
    <property type="evidence" value="ECO:0007669"/>
    <property type="project" value="UniProtKB-UniRule"/>
</dbReference>
<dbReference type="FunFam" id="3.40.225.10:FF:000003">
    <property type="entry name" value="Methylthioribulose-1-phosphate dehydratase"/>
    <property type="match status" value="1"/>
</dbReference>
<dbReference type="Gene3D" id="3.40.225.10">
    <property type="entry name" value="Class II aldolase/adducin N-terminal domain"/>
    <property type="match status" value="1"/>
</dbReference>
<dbReference type="HAMAP" id="MF_03116">
    <property type="entry name" value="Salvage_MtnB_euk"/>
    <property type="match status" value="1"/>
</dbReference>
<dbReference type="InterPro" id="IPR001303">
    <property type="entry name" value="Aldolase_II/adducin_N"/>
</dbReference>
<dbReference type="InterPro" id="IPR036409">
    <property type="entry name" value="Aldolase_II/adducin_N_sf"/>
</dbReference>
<dbReference type="InterPro" id="IPR017714">
    <property type="entry name" value="MethylthioRu-1-P_deHdtase_MtnB"/>
</dbReference>
<dbReference type="InterPro" id="IPR027514">
    <property type="entry name" value="Salvage_MtnB_euk"/>
</dbReference>
<dbReference type="NCBIfam" id="TIGR03328">
    <property type="entry name" value="salvage_mtnB"/>
    <property type="match status" value="1"/>
</dbReference>
<dbReference type="PANTHER" id="PTHR10640">
    <property type="entry name" value="METHYLTHIORIBULOSE-1-PHOSPHATE DEHYDRATASE"/>
    <property type="match status" value="1"/>
</dbReference>
<dbReference type="PANTHER" id="PTHR10640:SF7">
    <property type="entry name" value="METHYLTHIORIBULOSE-1-PHOSPHATE DEHYDRATASE"/>
    <property type="match status" value="1"/>
</dbReference>
<dbReference type="Pfam" id="PF00596">
    <property type="entry name" value="Aldolase_II"/>
    <property type="match status" value="1"/>
</dbReference>
<dbReference type="SMART" id="SM01007">
    <property type="entry name" value="Aldolase_II"/>
    <property type="match status" value="1"/>
</dbReference>
<dbReference type="SUPFAM" id="SSF53639">
    <property type="entry name" value="AraD/HMP-PK domain-like"/>
    <property type="match status" value="1"/>
</dbReference>
<sequence>MSAPCHCKHAEELTDTFSSSSLSYTNGKLSVLSPELQAEFQDPNHPANLICELCRLFYDNNWVTGTGGGISIRDVDGPNPNLVYIAPSGVQKERIQPWEMFLVELPDERIIRTPNDIPKELTKSYKYKPSACTPLFISCYTMRDAGACIHTHSQHAVMMTLFLENEKEFSISHIEQIKALPKLKYNEETKKIEKIGSMEYYDKLVIPIIENTPHEEDLTDSLQEAIKNYPGASAVLVRRHGIYVWGETVWKAKVYNEAIDYLLELAVKMKLAGIPLVKE</sequence>
<proteinExistence type="inferred from homology"/>
<gene>
    <name evidence="1" type="primary">MDE1</name>
    <name type="ORF">CTRG_05546</name>
</gene>
<name>MTNB_CANTT</name>
<comment type="function">
    <text evidence="1">Catalyzes the dehydration of methylthioribulose-1-phosphate (MTRu-1-P) into 2,3-diketo-5-methylthiopentyl-1-phosphate (DK-MTP-1-P).</text>
</comment>
<comment type="catalytic activity">
    <reaction evidence="1">
        <text>5-(methylsulfanyl)-D-ribulose 1-phosphate = 5-methylsulfanyl-2,3-dioxopentyl phosphate + H2O</text>
        <dbReference type="Rhea" id="RHEA:15549"/>
        <dbReference type="ChEBI" id="CHEBI:15377"/>
        <dbReference type="ChEBI" id="CHEBI:58548"/>
        <dbReference type="ChEBI" id="CHEBI:58828"/>
        <dbReference type="EC" id="4.2.1.109"/>
    </reaction>
</comment>
<comment type="cofactor">
    <cofactor evidence="1">
        <name>Zn(2+)</name>
        <dbReference type="ChEBI" id="CHEBI:29105"/>
    </cofactor>
    <text evidence="1">Binds 1 zinc ion per subunit.</text>
</comment>
<comment type="pathway">
    <text evidence="1">Amino-acid biosynthesis; L-methionine biosynthesis via salvage pathway; L-methionine from S-methyl-5-thio-alpha-D-ribose 1-phosphate: step 2/6.</text>
</comment>
<comment type="subcellular location">
    <subcellularLocation>
        <location evidence="1">Cytoplasm</location>
    </subcellularLocation>
</comment>
<comment type="similarity">
    <text evidence="1">Belongs to the aldolase class II family. MtnB subfamily.</text>
</comment>
<protein>
    <recommendedName>
        <fullName evidence="1">Methylthioribulose-1-phosphate dehydratase</fullName>
        <shortName evidence="1">MTRu-1-P dehydratase</shortName>
        <ecNumber evidence="1">4.2.1.109</ecNumber>
    </recommendedName>
</protein>
<reference key="1">
    <citation type="journal article" date="2009" name="Nature">
        <title>Evolution of pathogenicity and sexual reproduction in eight Candida genomes.</title>
        <authorList>
            <person name="Butler G."/>
            <person name="Rasmussen M.D."/>
            <person name="Lin M.F."/>
            <person name="Santos M.A.S."/>
            <person name="Sakthikumar S."/>
            <person name="Munro C.A."/>
            <person name="Rheinbay E."/>
            <person name="Grabherr M."/>
            <person name="Forche A."/>
            <person name="Reedy J.L."/>
            <person name="Agrafioti I."/>
            <person name="Arnaud M.B."/>
            <person name="Bates S."/>
            <person name="Brown A.J.P."/>
            <person name="Brunke S."/>
            <person name="Costanzo M.C."/>
            <person name="Fitzpatrick D.A."/>
            <person name="de Groot P.W.J."/>
            <person name="Harris D."/>
            <person name="Hoyer L.L."/>
            <person name="Hube B."/>
            <person name="Klis F.M."/>
            <person name="Kodira C."/>
            <person name="Lennard N."/>
            <person name="Logue M.E."/>
            <person name="Martin R."/>
            <person name="Neiman A.M."/>
            <person name="Nikolaou E."/>
            <person name="Quail M.A."/>
            <person name="Quinn J."/>
            <person name="Santos M.C."/>
            <person name="Schmitzberger F.F."/>
            <person name="Sherlock G."/>
            <person name="Shah P."/>
            <person name="Silverstein K.A.T."/>
            <person name="Skrzypek M.S."/>
            <person name="Soll D."/>
            <person name="Staggs R."/>
            <person name="Stansfield I."/>
            <person name="Stumpf M.P.H."/>
            <person name="Sudbery P.E."/>
            <person name="Srikantha T."/>
            <person name="Zeng Q."/>
            <person name="Berman J."/>
            <person name="Berriman M."/>
            <person name="Heitman J."/>
            <person name="Gow N.A.R."/>
            <person name="Lorenz M.C."/>
            <person name="Birren B.W."/>
            <person name="Kellis M."/>
            <person name="Cuomo C.A."/>
        </authorList>
    </citation>
    <scope>NUCLEOTIDE SEQUENCE [LARGE SCALE GENOMIC DNA]</scope>
    <source>
        <strain>ATCC MYA-3404 / T1</strain>
    </source>
</reference>